<feature type="chain" id="PRO_1000051315" description="Small ribosomal subunit protein uS9">
    <location>
        <begin position="1"/>
        <end position="130"/>
    </location>
</feature>
<organism>
    <name type="scientific">Salmonella choleraesuis (strain SC-B67)</name>
    <dbReference type="NCBI Taxonomy" id="321314"/>
    <lineage>
        <taxon>Bacteria</taxon>
        <taxon>Pseudomonadati</taxon>
        <taxon>Pseudomonadota</taxon>
        <taxon>Gammaproteobacteria</taxon>
        <taxon>Enterobacterales</taxon>
        <taxon>Enterobacteriaceae</taxon>
        <taxon>Salmonella</taxon>
    </lineage>
</organism>
<accession>Q57JC4</accession>
<gene>
    <name evidence="1" type="primary">rpsI</name>
    <name type="ordered locus">SCH_3282</name>
</gene>
<comment type="similarity">
    <text evidence="1">Belongs to the universal ribosomal protein uS9 family.</text>
</comment>
<sequence length="130" mass="14826">MAENQYYGTGRRKSSAARVFIKPGNGKIVINQRSLEQYFGRETARMVVRQPLELVDMVEKLDLYITVKGGGISGQAGAIRHGITRALMEYDESLRGELRKAGFVTRDARQVERKKVGLRKARRRPQFSKR</sequence>
<name>RS9_SALCH</name>
<evidence type="ECO:0000255" key="1">
    <source>
        <dbReference type="HAMAP-Rule" id="MF_00532"/>
    </source>
</evidence>
<evidence type="ECO:0000305" key="2"/>
<dbReference type="EMBL" id="AE017220">
    <property type="protein sequence ID" value="AAX67188.1"/>
    <property type="molecule type" value="Genomic_DNA"/>
</dbReference>
<dbReference type="RefSeq" id="WP_000829815.1">
    <property type="nucleotide sequence ID" value="NC_006905.1"/>
</dbReference>
<dbReference type="SMR" id="Q57JC4"/>
<dbReference type="GeneID" id="97393262"/>
<dbReference type="KEGG" id="sec:SCH_3282"/>
<dbReference type="HOGENOM" id="CLU_046483_2_1_6"/>
<dbReference type="Proteomes" id="UP000000538">
    <property type="component" value="Chromosome"/>
</dbReference>
<dbReference type="GO" id="GO:0022627">
    <property type="term" value="C:cytosolic small ribosomal subunit"/>
    <property type="evidence" value="ECO:0007669"/>
    <property type="project" value="TreeGrafter"/>
</dbReference>
<dbReference type="GO" id="GO:0003723">
    <property type="term" value="F:RNA binding"/>
    <property type="evidence" value="ECO:0007669"/>
    <property type="project" value="TreeGrafter"/>
</dbReference>
<dbReference type="GO" id="GO:0003735">
    <property type="term" value="F:structural constituent of ribosome"/>
    <property type="evidence" value="ECO:0007669"/>
    <property type="project" value="InterPro"/>
</dbReference>
<dbReference type="GO" id="GO:0006412">
    <property type="term" value="P:translation"/>
    <property type="evidence" value="ECO:0007669"/>
    <property type="project" value="UniProtKB-UniRule"/>
</dbReference>
<dbReference type="FunFam" id="3.30.230.10:FF:000001">
    <property type="entry name" value="30S ribosomal protein S9"/>
    <property type="match status" value="1"/>
</dbReference>
<dbReference type="Gene3D" id="3.30.230.10">
    <property type="match status" value="1"/>
</dbReference>
<dbReference type="HAMAP" id="MF_00532_B">
    <property type="entry name" value="Ribosomal_uS9_B"/>
    <property type="match status" value="1"/>
</dbReference>
<dbReference type="InterPro" id="IPR020568">
    <property type="entry name" value="Ribosomal_Su5_D2-typ_SF"/>
</dbReference>
<dbReference type="InterPro" id="IPR000754">
    <property type="entry name" value="Ribosomal_uS9"/>
</dbReference>
<dbReference type="InterPro" id="IPR023035">
    <property type="entry name" value="Ribosomal_uS9_bac/plastid"/>
</dbReference>
<dbReference type="InterPro" id="IPR020574">
    <property type="entry name" value="Ribosomal_uS9_CS"/>
</dbReference>
<dbReference type="InterPro" id="IPR014721">
    <property type="entry name" value="Ribsml_uS5_D2-typ_fold_subgr"/>
</dbReference>
<dbReference type="NCBIfam" id="NF001099">
    <property type="entry name" value="PRK00132.1"/>
    <property type="match status" value="1"/>
</dbReference>
<dbReference type="PANTHER" id="PTHR21569">
    <property type="entry name" value="RIBOSOMAL PROTEIN S9"/>
    <property type="match status" value="1"/>
</dbReference>
<dbReference type="PANTHER" id="PTHR21569:SF1">
    <property type="entry name" value="SMALL RIBOSOMAL SUBUNIT PROTEIN US9M"/>
    <property type="match status" value="1"/>
</dbReference>
<dbReference type="Pfam" id="PF00380">
    <property type="entry name" value="Ribosomal_S9"/>
    <property type="match status" value="1"/>
</dbReference>
<dbReference type="SUPFAM" id="SSF54211">
    <property type="entry name" value="Ribosomal protein S5 domain 2-like"/>
    <property type="match status" value="1"/>
</dbReference>
<dbReference type="PROSITE" id="PS00360">
    <property type="entry name" value="RIBOSOMAL_S9"/>
    <property type="match status" value="1"/>
</dbReference>
<protein>
    <recommendedName>
        <fullName evidence="1">Small ribosomal subunit protein uS9</fullName>
    </recommendedName>
    <alternativeName>
        <fullName evidence="2">30S ribosomal protein S9</fullName>
    </alternativeName>
</protein>
<reference key="1">
    <citation type="journal article" date="2005" name="Nucleic Acids Res.">
        <title>The genome sequence of Salmonella enterica serovar Choleraesuis, a highly invasive and resistant zoonotic pathogen.</title>
        <authorList>
            <person name="Chiu C.-H."/>
            <person name="Tang P."/>
            <person name="Chu C."/>
            <person name="Hu S."/>
            <person name="Bao Q."/>
            <person name="Yu J."/>
            <person name="Chou Y.-Y."/>
            <person name="Wang H.-S."/>
            <person name="Lee Y.-S."/>
        </authorList>
    </citation>
    <scope>NUCLEOTIDE SEQUENCE [LARGE SCALE GENOMIC DNA]</scope>
    <source>
        <strain>SC-B67</strain>
    </source>
</reference>
<proteinExistence type="inferred from homology"/>
<keyword id="KW-0687">Ribonucleoprotein</keyword>
<keyword id="KW-0689">Ribosomal protein</keyword>